<feature type="chain" id="PRO_1000084917" description="DNA polymerase IV">
    <location>
        <begin position="1"/>
        <end position="353"/>
    </location>
</feature>
<feature type="domain" description="UmuC" evidence="1">
    <location>
        <begin position="6"/>
        <end position="187"/>
    </location>
</feature>
<feature type="active site" evidence="1">
    <location>
        <position position="106"/>
    </location>
</feature>
<feature type="binding site" evidence="1">
    <location>
        <position position="10"/>
    </location>
    <ligand>
        <name>Mg(2+)</name>
        <dbReference type="ChEBI" id="CHEBI:18420"/>
    </ligand>
</feature>
<feature type="binding site" evidence="1">
    <location>
        <position position="105"/>
    </location>
    <ligand>
        <name>Mg(2+)</name>
        <dbReference type="ChEBI" id="CHEBI:18420"/>
    </ligand>
</feature>
<feature type="site" description="Substrate discrimination" evidence="1">
    <location>
        <position position="15"/>
    </location>
</feature>
<sequence>MTQRKIIHVDCDCFYAAIEMRDDPSLAGKPLAVGGSADRRGVIATCNYEARAYGVRSAMSSGHALKLCPDLTIVKPRMDAYREASKEIHTIFSDYTDLIEPLSLDEAYLDVSDSAHFGGSATRIAQDIRRRVSNQLHITVSAGVAPNKFLAKIASDWRKPNGLFVITPDQVEEFVSGLPVSKLHGVGKVTADKLGKLGINDCLQLREWDKLALVREFGSFGERLWSLARGIDERLVHNDSRRQSISVENTYDVDLPDLRSCLDKLPELLETLKTRMARIDSSYRPGKPFVKVKFHDFTQTTLEQAGAGRDLGSYQLMLTQAFNRGGKPVRLLGVGVRLEDLRGGFEQMELFER</sequence>
<accession>Q3KH18</accession>
<dbReference type="EC" id="2.7.7.7" evidence="1"/>
<dbReference type="EMBL" id="CP000094">
    <property type="protein sequence ID" value="ABA72938.1"/>
    <property type="molecule type" value="Genomic_DNA"/>
</dbReference>
<dbReference type="RefSeq" id="WP_011332757.1">
    <property type="nucleotide sequence ID" value="NC_007492.2"/>
</dbReference>
<dbReference type="SMR" id="Q3KH18"/>
<dbReference type="KEGG" id="pfo:Pfl01_1195"/>
<dbReference type="eggNOG" id="COG0389">
    <property type="taxonomic scope" value="Bacteria"/>
</dbReference>
<dbReference type="HOGENOM" id="CLU_012348_1_2_6"/>
<dbReference type="Proteomes" id="UP000002704">
    <property type="component" value="Chromosome"/>
</dbReference>
<dbReference type="GO" id="GO:0005829">
    <property type="term" value="C:cytosol"/>
    <property type="evidence" value="ECO:0007669"/>
    <property type="project" value="TreeGrafter"/>
</dbReference>
<dbReference type="GO" id="GO:0003684">
    <property type="term" value="F:damaged DNA binding"/>
    <property type="evidence" value="ECO:0007669"/>
    <property type="project" value="InterPro"/>
</dbReference>
<dbReference type="GO" id="GO:0003887">
    <property type="term" value="F:DNA-directed DNA polymerase activity"/>
    <property type="evidence" value="ECO:0007669"/>
    <property type="project" value="UniProtKB-UniRule"/>
</dbReference>
<dbReference type="GO" id="GO:0000287">
    <property type="term" value="F:magnesium ion binding"/>
    <property type="evidence" value="ECO:0007669"/>
    <property type="project" value="UniProtKB-UniRule"/>
</dbReference>
<dbReference type="GO" id="GO:0006261">
    <property type="term" value="P:DNA-templated DNA replication"/>
    <property type="evidence" value="ECO:0007669"/>
    <property type="project" value="UniProtKB-UniRule"/>
</dbReference>
<dbReference type="GO" id="GO:0042276">
    <property type="term" value="P:error-prone translesion synthesis"/>
    <property type="evidence" value="ECO:0007669"/>
    <property type="project" value="TreeGrafter"/>
</dbReference>
<dbReference type="GO" id="GO:0009432">
    <property type="term" value="P:SOS response"/>
    <property type="evidence" value="ECO:0007669"/>
    <property type="project" value="TreeGrafter"/>
</dbReference>
<dbReference type="CDD" id="cd03586">
    <property type="entry name" value="PolY_Pol_IV_kappa"/>
    <property type="match status" value="1"/>
</dbReference>
<dbReference type="FunFam" id="1.10.150.20:FF:000019">
    <property type="entry name" value="DNA polymerase IV"/>
    <property type="match status" value="1"/>
</dbReference>
<dbReference type="FunFam" id="3.30.70.270:FF:000002">
    <property type="entry name" value="DNA polymerase IV"/>
    <property type="match status" value="1"/>
</dbReference>
<dbReference type="FunFam" id="3.40.1170.60:FF:000001">
    <property type="entry name" value="DNA polymerase IV"/>
    <property type="match status" value="1"/>
</dbReference>
<dbReference type="Gene3D" id="3.30.70.270">
    <property type="match status" value="1"/>
</dbReference>
<dbReference type="Gene3D" id="3.40.1170.60">
    <property type="match status" value="1"/>
</dbReference>
<dbReference type="Gene3D" id="1.10.150.20">
    <property type="entry name" value="5' to 3' exonuclease, C-terminal subdomain"/>
    <property type="match status" value="1"/>
</dbReference>
<dbReference type="Gene3D" id="3.30.1490.100">
    <property type="entry name" value="DNA polymerase, Y-family, little finger domain"/>
    <property type="match status" value="1"/>
</dbReference>
<dbReference type="HAMAP" id="MF_01113">
    <property type="entry name" value="DNApol_IV"/>
    <property type="match status" value="1"/>
</dbReference>
<dbReference type="InterPro" id="IPR043502">
    <property type="entry name" value="DNA/RNA_pol_sf"/>
</dbReference>
<dbReference type="InterPro" id="IPR036775">
    <property type="entry name" value="DNA_pol_Y-fam_lit_finger_sf"/>
</dbReference>
<dbReference type="InterPro" id="IPR017961">
    <property type="entry name" value="DNA_pol_Y-fam_little_finger"/>
</dbReference>
<dbReference type="InterPro" id="IPR050116">
    <property type="entry name" value="DNA_polymerase-Y"/>
</dbReference>
<dbReference type="InterPro" id="IPR022880">
    <property type="entry name" value="DNApol_IV"/>
</dbReference>
<dbReference type="InterPro" id="IPR053848">
    <property type="entry name" value="IMS_HHH_1"/>
</dbReference>
<dbReference type="InterPro" id="IPR043128">
    <property type="entry name" value="Rev_trsase/Diguanyl_cyclase"/>
</dbReference>
<dbReference type="InterPro" id="IPR001126">
    <property type="entry name" value="UmuC"/>
</dbReference>
<dbReference type="NCBIfam" id="NF002677">
    <property type="entry name" value="PRK02406.1"/>
    <property type="match status" value="1"/>
</dbReference>
<dbReference type="PANTHER" id="PTHR11076:SF33">
    <property type="entry name" value="DNA POLYMERASE KAPPA"/>
    <property type="match status" value="1"/>
</dbReference>
<dbReference type="PANTHER" id="PTHR11076">
    <property type="entry name" value="DNA REPAIR POLYMERASE UMUC / TRANSFERASE FAMILY MEMBER"/>
    <property type="match status" value="1"/>
</dbReference>
<dbReference type="Pfam" id="PF00817">
    <property type="entry name" value="IMS"/>
    <property type="match status" value="1"/>
</dbReference>
<dbReference type="Pfam" id="PF11799">
    <property type="entry name" value="IMS_C"/>
    <property type="match status" value="1"/>
</dbReference>
<dbReference type="Pfam" id="PF21999">
    <property type="entry name" value="IMS_HHH_1"/>
    <property type="match status" value="1"/>
</dbReference>
<dbReference type="SUPFAM" id="SSF56672">
    <property type="entry name" value="DNA/RNA polymerases"/>
    <property type="match status" value="1"/>
</dbReference>
<dbReference type="SUPFAM" id="SSF100879">
    <property type="entry name" value="Lesion bypass DNA polymerase (Y-family), little finger domain"/>
    <property type="match status" value="1"/>
</dbReference>
<dbReference type="PROSITE" id="PS50173">
    <property type="entry name" value="UMUC"/>
    <property type="match status" value="1"/>
</dbReference>
<proteinExistence type="inferred from homology"/>
<gene>
    <name evidence="1" type="primary">dinB</name>
    <name type="ordered locus">Pfl01_1195</name>
</gene>
<name>DPO4_PSEPF</name>
<reference key="1">
    <citation type="journal article" date="2009" name="Genome Biol.">
        <title>Genomic and genetic analyses of diversity and plant interactions of Pseudomonas fluorescens.</title>
        <authorList>
            <person name="Silby M.W."/>
            <person name="Cerdeno-Tarraga A.M."/>
            <person name="Vernikos G.S."/>
            <person name="Giddens S.R."/>
            <person name="Jackson R.W."/>
            <person name="Preston G.M."/>
            <person name="Zhang X.-X."/>
            <person name="Moon C.D."/>
            <person name="Gehrig S.M."/>
            <person name="Godfrey S.A.C."/>
            <person name="Knight C.G."/>
            <person name="Malone J.G."/>
            <person name="Robinson Z."/>
            <person name="Spiers A.J."/>
            <person name="Harris S."/>
            <person name="Challis G.L."/>
            <person name="Yaxley A.M."/>
            <person name="Harris D."/>
            <person name="Seeger K."/>
            <person name="Murphy L."/>
            <person name="Rutter S."/>
            <person name="Squares R."/>
            <person name="Quail M.A."/>
            <person name="Saunders E."/>
            <person name="Mavromatis K."/>
            <person name="Brettin T.S."/>
            <person name="Bentley S.D."/>
            <person name="Hothersall J."/>
            <person name="Stephens E."/>
            <person name="Thomas C.M."/>
            <person name="Parkhill J."/>
            <person name="Levy S.B."/>
            <person name="Rainey P.B."/>
            <person name="Thomson N.R."/>
        </authorList>
    </citation>
    <scope>NUCLEOTIDE SEQUENCE [LARGE SCALE GENOMIC DNA]</scope>
    <source>
        <strain>Pf0-1</strain>
    </source>
</reference>
<protein>
    <recommendedName>
        <fullName evidence="1">DNA polymerase IV</fullName>
        <shortName evidence="1">Pol IV</shortName>
        <ecNumber evidence="1">2.7.7.7</ecNumber>
    </recommendedName>
</protein>
<keyword id="KW-0963">Cytoplasm</keyword>
<keyword id="KW-0227">DNA damage</keyword>
<keyword id="KW-0234">DNA repair</keyword>
<keyword id="KW-0235">DNA replication</keyword>
<keyword id="KW-0238">DNA-binding</keyword>
<keyword id="KW-0239">DNA-directed DNA polymerase</keyword>
<keyword id="KW-0460">Magnesium</keyword>
<keyword id="KW-0479">Metal-binding</keyword>
<keyword id="KW-0515">Mutator protein</keyword>
<keyword id="KW-0548">Nucleotidyltransferase</keyword>
<keyword id="KW-0808">Transferase</keyword>
<evidence type="ECO:0000255" key="1">
    <source>
        <dbReference type="HAMAP-Rule" id="MF_01113"/>
    </source>
</evidence>
<comment type="function">
    <text evidence="1">Poorly processive, error-prone DNA polymerase involved in untargeted mutagenesis. Copies undamaged DNA at stalled replication forks, which arise in vivo from mismatched or misaligned primer ends. These misaligned primers can be extended by PolIV. Exhibits no 3'-5' exonuclease (proofreading) activity. May be involved in translesional synthesis, in conjunction with the beta clamp from PolIII.</text>
</comment>
<comment type="catalytic activity">
    <reaction evidence="1">
        <text>DNA(n) + a 2'-deoxyribonucleoside 5'-triphosphate = DNA(n+1) + diphosphate</text>
        <dbReference type="Rhea" id="RHEA:22508"/>
        <dbReference type="Rhea" id="RHEA-COMP:17339"/>
        <dbReference type="Rhea" id="RHEA-COMP:17340"/>
        <dbReference type="ChEBI" id="CHEBI:33019"/>
        <dbReference type="ChEBI" id="CHEBI:61560"/>
        <dbReference type="ChEBI" id="CHEBI:173112"/>
        <dbReference type="EC" id="2.7.7.7"/>
    </reaction>
</comment>
<comment type="cofactor">
    <cofactor evidence="1">
        <name>Mg(2+)</name>
        <dbReference type="ChEBI" id="CHEBI:18420"/>
    </cofactor>
    <text evidence="1">Binds 2 magnesium ions per subunit.</text>
</comment>
<comment type="subunit">
    <text evidence="1">Monomer.</text>
</comment>
<comment type="subcellular location">
    <subcellularLocation>
        <location evidence="1">Cytoplasm</location>
    </subcellularLocation>
</comment>
<comment type="similarity">
    <text evidence="1">Belongs to the DNA polymerase type-Y family.</text>
</comment>
<organism>
    <name type="scientific">Pseudomonas fluorescens (strain Pf0-1)</name>
    <dbReference type="NCBI Taxonomy" id="205922"/>
    <lineage>
        <taxon>Bacteria</taxon>
        <taxon>Pseudomonadati</taxon>
        <taxon>Pseudomonadota</taxon>
        <taxon>Gammaproteobacteria</taxon>
        <taxon>Pseudomonadales</taxon>
        <taxon>Pseudomonadaceae</taxon>
        <taxon>Pseudomonas</taxon>
    </lineage>
</organism>